<proteinExistence type="evidence at protein level"/>
<feature type="signal peptide" evidence="2">
    <location>
        <begin position="1"/>
        <end position="24"/>
    </location>
</feature>
<feature type="chain" id="PRO_0000032391" description="Alpha-1-antitrypsin 1-4">
    <location>
        <begin position="25"/>
        <end position="413"/>
    </location>
</feature>
<feature type="region of interest" description="RCL">
    <location>
        <begin position="368"/>
        <end position="387"/>
    </location>
</feature>
<feature type="site" description="Reactive bond" evidence="1">
    <location>
        <begin position="377"/>
        <end position="378"/>
    </location>
</feature>
<feature type="glycosylation site" description="N-linked (GlcNAc...) asparagine" evidence="2">
    <location>
        <position position="64"/>
    </location>
</feature>
<feature type="glycosylation site" description="N-linked (GlcNAc...) asparagine" evidence="2">
    <location>
        <position position="101"/>
    </location>
</feature>
<feature type="glycosylation site" description="N-linked (GlcNAc...) asparagine" evidence="2">
    <location>
        <position position="265"/>
    </location>
</feature>
<gene>
    <name type="primary">Serpina1d</name>
    <name type="synonym">Dom4</name>
    <name type="synonym">Spi1-4</name>
</gene>
<keyword id="KW-0325">Glycoprotein</keyword>
<keyword id="KW-0646">Protease inhibitor</keyword>
<keyword id="KW-1185">Reference proteome</keyword>
<keyword id="KW-0964">Secreted</keyword>
<keyword id="KW-0722">Serine protease inhibitor</keyword>
<keyword id="KW-0732">Signal</keyword>
<name>A1AT4_MOUSE</name>
<sequence>MTPSISWSLLLLAGLCCLVPSFLAEDVQETDTSQKDQSPASHEIATNLGDFALRLYRELVHQSNTSNIFFSPVSIATAFAMLSLGSKGDTHTQILEGLQFNLTQTSEADIHKSFQHLLQTLNRPDSELQLSTGNGLFVNNDLKLVEKFLEEAKNHYQAEVFSVNFAESEEAKKVINDFVEKGTQGKIVEAVKKLDQDTVFALANYILFKGKWKQPFDPENTEEAEFHVDESTTVKVPMMTLSGMLDVHHCSMLSSWVLLMDYAGNTTAVFLLPDDGKMQHLEQTLNKELISQFLLNRRRSDAQIHIPRLSISGNYNLKTLMSPLGITRIFNNGADLSGITEENAPLKLSKAVHKAVLTIDETGTEAAAATVLQVATYSMPPIVRFDHPFLFIIFEEHTQSPIFVGKVVDPTHK</sequence>
<organism>
    <name type="scientific">Mus musculus</name>
    <name type="common">Mouse</name>
    <dbReference type="NCBI Taxonomy" id="10090"/>
    <lineage>
        <taxon>Eukaryota</taxon>
        <taxon>Metazoa</taxon>
        <taxon>Chordata</taxon>
        <taxon>Craniata</taxon>
        <taxon>Vertebrata</taxon>
        <taxon>Euteleostomi</taxon>
        <taxon>Mammalia</taxon>
        <taxon>Eutheria</taxon>
        <taxon>Euarchontoglires</taxon>
        <taxon>Glires</taxon>
        <taxon>Rodentia</taxon>
        <taxon>Myomorpha</taxon>
        <taxon>Muroidea</taxon>
        <taxon>Muridae</taxon>
        <taxon>Murinae</taxon>
        <taxon>Mus</taxon>
        <taxon>Mus</taxon>
    </lineage>
</organism>
<accession>Q00897</accession>
<reference key="1">
    <citation type="journal article" date="1991" name="Proc. Natl. Acad. Sci. U.S.A.">
        <title>Multiple murine alpha 1-protease inhibitor genes show unusual evolutionary divergence.</title>
        <authorList>
            <person name="Borriello F."/>
            <person name="Krauter K.S."/>
        </authorList>
    </citation>
    <scope>NUCLEOTIDE SEQUENCE [MRNA]</scope>
    <source>
        <strain>C57BL/6J</strain>
        <tissue>Liver</tissue>
    </source>
</reference>
<reference key="2">
    <citation type="journal article" date="2005" name="Science">
        <title>The transcriptional landscape of the mammalian genome.</title>
        <authorList>
            <person name="Carninci P."/>
            <person name="Kasukawa T."/>
            <person name="Katayama S."/>
            <person name="Gough J."/>
            <person name="Frith M.C."/>
            <person name="Maeda N."/>
            <person name="Oyama R."/>
            <person name="Ravasi T."/>
            <person name="Lenhard B."/>
            <person name="Wells C."/>
            <person name="Kodzius R."/>
            <person name="Shimokawa K."/>
            <person name="Bajic V.B."/>
            <person name="Brenner S.E."/>
            <person name="Batalov S."/>
            <person name="Forrest A.R."/>
            <person name="Zavolan M."/>
            <person name="Davis M.J."/>
            <person name="Wilming L.G."/>
            <person name="Aidinis V."/>
            <person name="Allen J.E."/>
            <person name="Ambesi-Impiombato A."/>
            <person name="Apweiler R."/>
            <person name="Aturaliya R.N."/>
            <person name="Bailey T.L."/>
            <person name="Bansal M."/>
            <person name="Baxter L."/>
            <person name="Beisel K.W."/>
            <person name="Bersano T."/>
            <person name="Bono H."/>
            <person name="Chalk A.M."/>
            <person name="Chiu K.P."/>
            <person name="Choudhary V."/>
            <person name="Christoffels A."/>
            <person name="Clutterbuck D.R."/>
            <person name="Crowe M.L."/>
            <person name="Dalla E."/>
            <person name="Dalrymple B.P."/>
            <person name="de Bono B."/>
            <person name="Della Gatta G."/>
            <person name="di Bernardo D."/>
            <person name="Down T."/>
            <person name="Engstrom P."/>
            <person name="Fagiolini M."/>
            <person name="Faulkner G."/>
            <person name="Fletcher C.F."/>
            <person name="Fukushima T."/>
            <person name="Furuno M."/>
            <person name="Futaki S."/>
            <person name="Gariboldi M."/>
            <person name="Georgii-Hemming P."/>
            <person name="Gingeras T.R."/>
            <person name="Gojobori T."/>
            <person name="Green R.E."/>
            <person name="Gustincich S."/>
            <person name="Harbers M."/>
            <person name="Hayashi Y."/>
            <person name="Hensch T.K."/>
            <person name="Hirokawa N."/>
            <person name="Hill D."/>
            <person name="Huminiecki L."/>
            <person name="Iacono M."/>
            <person name="Ikeo K."/>
            <person name="Iwama A."/>
            <person name="Ishikawa T."/>
            <person name="Jakt M."/>
            <person name="Kanapin A."/>
            <person name="Katoh M."/>
            <person name="Kawasawa Y."/>
            <person name="Kelso J."/>
            <person name="Kitamura H."/>
            <person name="Kitano H."/>
            <person name="Kollias G."/>
            <person name="Krishnan S.P."/>
            <person name="Kruger A."/>
            <person name="Kummerfeld S.K."/>
            <person name="Kurochkin I.V."/>
            <person name="Lareau L.F."/>
            <person name="Lazarevic D."/>
            <person name="Lipovich L."/>
            <person name="Liu J."/>
            <person name="Liuni S."/>
            <person name="McWilliam S."/>
            <person name="Madan Babu M."/>
            <person name="Madera M."/>
            <person name="Marchionni L."/>
            <person name="Matsuda H."/>
            <person name="Matsuzawa S."/>
            <person name="Miki H."/>
            <person name="Mignone F."/>
            <person name="Miyake S."/>
            <person name="Morris K."/>
            <person name="Mottagui-Tabar S."/>
            <person name="Mulder N."/>
            <person name="Nakano N."/>
            <person name="Nakauchi H."/>
            <person name="Ng P."/>
            <person name="Nilsson R."/>
            <person name="Nishiguchi S."/>
            <person name="Nishikawa S."/>
            <person name="Nori F."/>
            <person name="Ohara O."/>
            <person name="Okazaki Y."/>
            <person name="Orlando V."/>
            <person name="Pang K.C."/>
            <person name="Pavan W.J."/>
            <person name="Pavesi G."/>
            <person name="Pesole G."/>
            <person name="Petrovsky N."/>
            <person name="Piazza S."/>
            <person name="Reed J."/>
            <person name="Reid J.F."/>
            <person name="Ring B.Z."/>
            <person name="Ringwald M."/>
            <person name="Rost B."/>
            <person name="Ruan Y."/>
            <person name="Salzberg S.L."/>
            <person name="Sandelin A."/>
            <person name="Schneider C."/>
            <person name="Schoenbach C."/>
            <person name="Sekiguchi K."/>
            <person name="Semple C.A."/>
            <person name="Seno S."/>
            <person name="Sessa L."/>
            <person name="Sheng Y."/>
            <person name="Shibata Y."/>
            <person name="Shimada H."/>
            <person name="Shimada K."/>
            <person name="Silva D."/>
            <person name="Sinclair B."/>
            <person name="Sperling S."/>
            <person name="Stupka E."/>
            <person name="Sugiura K."/>
            <person name="Sultana R."/>
            <person name="Takenaka Y."/>
            <person name="Taki K."/>
            <person name="Tammoja K."/>
            <person name="Tan S.L."/>
            <person name="Tang S."/>
            <person name="Taylor M.S."/>
            <person name="Tegner J."/>
            <person name="Teichmann S.A."/>
            <person name="Ueda H.R."/>
            <person name="van Nimwegen E."/>
            <person name="Verardo R."/>
            <person name="Wei C.L."/>
            <person name="Yagi K."/>
            <person name="Yamanishi H."/>
            <person name="Zabarovsky E."/>
            <person name="Zhu S."/>
            <person name="Zimmer A."/>
            <person name="Hide W."/>
            <person name="Bult C."/>
            <person name="Grimmond S.M."/>
            <person name="Teasdale R.D."/>
            <person name="Liu E.T."/>
            <person name="Brusic V."/>
            <person name="Quackenbush J."/>
            <person name="Wahlestedt C."/>
            <person name="Mattick J.S."/>
            <person name="Hume D.A."/>
            <person name="Kai C."/>
            <person name="Sasaki D."/>
            <person name="Tomaru Y."/>
            <person name="Fukuda S."/>
            <person name="Kanamori-Katayama M."/>
            <person name="Suzuki M."/>
            <person name="Aoki J."/>
            <person name="Arakawa T."/>
            <person name="Iida J."/>
            <person name="Imamura K."/>
            <person name="Itoh M."/>
            <person name="Kato T."/>
            <person name="Kawaji H."/>
            <person name="Kawagashira N."/>
            <person name="Kawashima T."/>
            <person name="Kojima M."/>
            <person name="Kondo S."/>
            <person name="Konno H."/>
            <person name="Nakano K."/>
            <person name="Ninomiya N."/>
            <person name="Nishio T."/>
            <person name="Okada M."/>
            <person name="Plessy C."/>
            <person name="Shibata K."/>
            <person name="Shiraki T."/>
            <person name="Suzuki S."/>
            <person name="Tagami M."/>
            <person name="Waki K."/>
            <person name="Watahiki A."/>
            <person name="Okamura-Oho Y."/>
            <person name="Suzuki H."/>
            <person name="Kawai J."/>
            <person name="Hayashizaki Y."/>
        </authorList>
    </citation>
    <scope>NUCLEOTIDE SEQUENCE [LARGE SCALE MRNA]</scope>
    <source>
        <strain>C57BL/6J</strain>
        <tissue>Kidney</tissue>
    </source>
</reference>
<reference key="3">
    <citation type="journal article" date="1996" name="Biochem. Biophys. Res. Commun.">
        <title>The expression and characterization of five recombinant murine alpha 1-protease inhibitor proteins.</title>
        <authorList>
            <person name="Paterson T."/>
            <person name="Moore S."/>
        </authorList>
    </citation>
    <scope>FUNCTION</scope>
    <scope>SUBCELLULAR LOCATION</scope>
</reference>
<reference key="4">
    <citation type="journal article" date="2002" name="Mol. Biol. Evol.">
        <title>Functional diversification during evolution of the murine alpha(1)-proteinase inhibitor family: role of the hypervariable reactive center loop.</title>
        <authorList>
            <person name="Barbour K.W."/>
            <person name="Goodwin R.L."/>
            <person name="Guillonneau F."/>
            <person name="Wang Y."/>
            <person name="Baumann H."/>
            <person name="Berger F.G."/>
        </authorList>
    </citation>
    <scope>FUNCTION</scope>
    <scope>SUBCELLULAR LOCATION</scope>
    <scope>REGION RCL</scope>
</reference>
<reference key="5">
    <citation type="journal article" date="2003" name="Genomics">
        <title>A review and comparison of the murine alpha1-antitrypsin and alpha1-antichymotrypsin multigene clusters with the human clade A serpins.</title>
        <authorList>
            <person name="Forsyth S."/>
            <person name="Horvath A."/>
            <person name="Coughlin P."/>
        </authorList>
    </citation>
    <scope>GENE FAMILY</scope>
    <scope>NOMENCLATURE</scope>
</reference>
<reference key="6">
    <citation type="journal article" date="2010" name="Cell">
        <title>A tissue-specific atlas of mouse protein phosphorylation and expression.</title>
        <authorList>
            <person name="Huttlin E.L."/>
            <person name="Jedrychowski M.P."/>
            <person name="Elias J.E."/>
            <person name="Goswami T."/>
            <person name="Rad R."/>
            <person name="Beausoleil S.A."/>
            <person name="Villen J."/>
            <person name="Haas W."/>
            <person name="Sowa M.E."/>
            <person name="Gygi S.P."/>
        </authorList>
    </citation>
    <scope>IDENTIFICATION BY MASS SPECTROMETRY [LARGE SCALE ANALYSIS]</scope>
    <source>
        <tissue>Brown adipose tissue</tissue>
        <tissue>Heart</tissue>
        <tissue>Liver</tissue>
        <tissue>Lung</tissue>
        <tissue>Spleen</tissue>
        <tissue>Testis</tissue>
    </source>
</reference>
<dbReference type="EMBL" id="M75718">
    <property type="protein sequence ID" value="AAC28867.1"/>
    <property type="molecule type" value="mRNA"/>
</dbReference>
<dbReference type="EMBL" id="AK002537">
    <property type="protein sequence ID" value="BAB22173.1"/>
    <property type="molecule type" value="mRNA"/>
</dbReference>
<dbReference type="CCDS" id="CCDS26139.1"/>
<dbReference type="PIR" id="I49473">
    <property type="entry name" value="I49473"/>
</dbReference>
<dbReference type="RefSeq" id="NP_033272.1">
    <property type="nucleotide sequence ID" value="NM_009246.3"/>
</dbReference>
<dbReference type="SMR" id="Q00897"/>
<dbReference type="FunCoup" id="Q00897">
    <property type="interactions" value="211"/>
</dbReference>
<dbReference type="STRING" id="10090.ENSMUSP00000077909"/>
<dbReference type="MEROPS" id="I04.001"/>
<dbReference type="GlyCosmos" id="Q00897">
    <property type="glycosylation" value="3 sites, No reported glycans"/>
</dbReference>
<dbReference type="GlyGen" id="Q00897">
    <property type="glycosylation" value="4 sites, 1 O-linked glycan (1 site)"/>
</dbReference>
<dbReference type="iPTMnet" id="Q00897"/>
<dbReference type="PhosphoSitePlus" id="Q00897"/>
<dbReference type="SwissPalm" id="Q00897"/>
<dbReference type="CPTAC" id="non-CPTAC-3529"/>
<dbReference type="CPTAC" id="non-CPTAC-3530"/>
<dbReference type="jPOST" id="Q00897"/>
<dbReference type="PaxDb" id="10090-ENSMUSP00000077909"/>
<dbReference type="PeptideAtlas" id="Q00897"/>
<dbReference type="ProteomicsDB" id="285947"/>
<dbReference type="DNASU" id="20703"/>
<dbReference type="Ensembl" id="ENSMUST00000078869.6">
    <property type="protein sequence ID" value="ENSMUSP00000077909.6"/>
    <property type="gene ID" value="ENSMUSG00000071177.5"/>
</dbReference>
<dbReference type="GeneID" id="20703"/>
<dbReference type="KEGG" id="mmu:20703"/>
<dbReference type="UCSC" id="uc007owg.1">
    <property type="organism name" value="mouse"/>
</dbReference>
<dbReference type="AGR" id="MGI:891968"/>
<dbReference type="CTD" id="20703"/>
<dbReference type="MGI" id="MGI:891968">
    <property type="gene designation" value="Serpina1d"/>
</dbReference>
<dbReference type="VEuPathDB" id="HostDB:ENSMUSG00000071177"/>
<dbReference type="eggNOG" id="KOG2392">
    <property type="taxonomic scope" value="Eukaryota"/>
</dbReference>
<dbReference type="GeneTree" id="ENSGT00940000154493"/>
<dbReference type="HOGENOM" id="CLU_023330_2_1_1"/>
<dbReference type="InParanoid" id="Q00897"/>
<dbReference type="OMA" id="AEIMTMS"/>
<dbReference type="OrthoDB" id="671595at2759"/>
<dbReference type="PhylomeDB" id="Q00897"/>
<dbReference type="TreeFam" id="TF343201"/>
<dbReference type="BioGRID-ORCS" id="20703">
    <property type="hits" value="2 hits in 74 CRISPR screens"/>
</dbReference>
<dbReference type="ChiTaRS" id="Serpina1d">
    <property type="organism name" value="mouse"/>
</dbReference>
<dbReference type="PRO" id="PR:Q00897"/>
<dbReference type="Proteomes" id="UP000000589">
    <property type="component" value="Chromosome 12"/>
</dbReference>
<dbReference type="RNAct" id="Q00897">
    <property type="molecule type" value="protein"/>
</dbReference>
<dbReference type="Bgee" id="ENSMUSG00000071177">
    <property type="expression patterns" value="Expressed in proximal tubule and 36 other cell types or tissues"/>
</dbReference>
<dbReference type="GO" id="GO:0005576">
    <property type="term" value="C:extracellular region"/>
    <property type="evidence" value="ECO:0000314"/>
    <property type="project" value="MGI"/>
</dbReference>
<dbReference type="GO" id="GO:0005615">
    <property type="term" value="C:extracellular space"/>
    <property type="evidence" value="ECO:0007669"/>
    <property type="project" value="InterPro"/>
</dbReference>
<dbReference type="GO" id="GO:0004867">
    <property type="term" value="F:serine-type endopeptidase inhibitor activity"/>
    <property type="evidence" value="ECO:0007669"/>
    <property type="project" value="UniProtKB-KW"/>
</dbReference>
<dbReference type="GO" id="GO:0034097">
    <property type="term" value="P:response to cytokine"/>
    <property type="evidence" value="ECO:0000314"/>
    <property type="project" value="MGI"/>
</dbReference>
<dbReference type="GO" id="GO:0043434">
    <property type="term" value="P:response to peptide hormone"/>
    <property type="evidence" value="ECO:0000314"/>
    <property type="project" value="MGI"/>
</dbReference>
<dbReference type="CDD" id="cd02056">
    <property type="entry name" value="serpinA1_A1AT"/>
    <property type="match status" value="1"/>
</dbReference>
<dbReference type="FunFam" id="2.30.39.10:FF:000003">
    <property type="entry name" value="alpha-1-antitrypsin isoform X1"/>
    <property type="match status" value="1"/>
</dbReference>
<dbReference type="FunFam" id="3.30.497.10:FF:000001">
    <property type="entry name" value="Serine protease inhibitor"/>
    <property type="match status" value="1"/>
</dbReference>
<dbReference type="FunFam" id="2.10.310.10:FF:000001">
    <property type="entry name" value="Serpin family A member 1"/>
    <property type="match status" value="1"/>
</dbReference>
<dbReference type="Gene3D" id="2.30.39.10">
    <property type="entry name" value="Alpha-1-antitrypsin, domain 1"/>
    <property type="match status" value="1"/>
</dbReference>
<dbReference type="Gene3D" id="3.30.497.10">
    <property type="entry name" value="Antithrombin, subunit I, domain 2"/>
    <property type="match status" value="1"/>
</dbReference>
<dbReference type="Gene3D" id="2.10.310.10">
    <property type="entry name" value="Serpins superfamily"/>
    <property type="match status" value="1"/>
</dbReference>
<dbReference type="InterPro" id="IPR023795">
    <property type="entry name" value="Serpin_CS"/>
</dbReference>
<dbReference type="InterPro" id="IPR023796">
    <property type="entry name" value="Serpin_dom"/>
</dbReference>
<dbReference type="InterPro" id="IPR000215">
    <property type="entry name" value="Serpin_fam"/>
</dbReference>
<dbReference type="InterPro" id="IPR036186">
    <property type="entry name" value="Serpin_sf"/>
</dbReference>
<dbReference type="InterPro" id="IPR042178">
    <property type="entry name" value="Serpin_sf_1"/>
</dbReference>
<dbReference type="InterPro" id="IPR042185">
    <property type="entry name" value="Serpin_sf_2"/>
</dbReference>
<dbReference type="PANTHER" id="PTHR11461:SF165">
    <property type="entry name" value="ALPHA-1-ANTITRYPSIN"/>
    <property type="match status" value="1"/>
</dbReference>
<dbReference type="PANTHER" id="PTHR11461">
    <property type="entry name" value="SERINE PROTEASE INHIBITOR, SERPIN"/>
    <property type="match status" value="1"/>
</dbReference>
<dbReference type="Pfam" id="PF00079">
    <property type="entry name" value="Serpin"/>
    <property type="match status" value="1"/>
</dbReference>
<dbReference type="SMART" id="SM00093">
    <property type="entry name" value="SERPIN"/>
    <property type="match status" value="1"/>
</dbReference>
<dbReference type="SUPFAM" id="SSF56574">
    <property type="entry name" value="Serpins"/>
    <property type="match status" value="1"/>
</dbReference>
<dbReference type="PROSITE" id="PS00284">
    <property type="entry name" value="SERPIN"/>
    <property type="match status" value="1"/>
</dbReference>
<protein>
    <recommendedName>
        <fullName>Alpha-1-antitrypsin 1-4</fullName>
    </recommendedName>
    <alternativeName>
        <fullName>Alpha-1 protease inhibitor 4</fullName>
    </alternativeName>
    <alternativeName>
        <fullName>Serine protease inhibitor 1-4</fullName>
    </alternativeName>
    <alternativeName>
        <fullName>Serine protease inhibitor A1d</fullName>
        <shortName>Serpin A1d</shortName>
    </alternativeName>
</protein>
<evidence type="ECO:0000250" key="1"/>
<evidence type="ECO:0000255" key="2"/>
<evidence type="ECO:0000269" key="3">
    <source>
    </source>
</evidence>
<evidence type="ECO:0000269" key="4">
    <source>
    </source>
</evidence>
<evidence type="ECO:0000305" key="5"/>
<comment type="function">
    <text evidence="3 4">Inhibitor of serine proteases. Can inhibit trypsin and chymotrypsin; relatively ineffective against elastase.</text>
</comment>
<comment type="subcellular location">
    <subcellularLocation>
        <location evidence="3 4">Secreted</location>
    </subcellularLocation>
</comment>
<comment type="domain">
    <text evidence="1">The reactive center loop (RCL) extends out from the body of the protein and directs binding to the target protease. The protease cleaves the serpin at the reactive site within the RCL, establishing a covalent linkage between the carboxyl group of the serpin reactive site and the serine hydroxyl of the protease. The resulting inactive serpin-protease complex is highly stable (By similarity). Variability within the reactive center loop (RCL) sequences of Serpina1-related genes may determine target protease specificity.</text>
</comment>
<comment type="miscellaneous">
    <text>Murine alpha-1-antitrypsin is represented by a cluster of up to 6 individual Serpina1-related genes. The precise complement of Serpina1-related genes present varies according to the strain of the animal.</text>
</comment>
<comment type="similarity">
    <text evidence="5">Belongs to the serpin family.</text>
</comment>